<gene>
    <name type="primary">motA</name>
    <name type="ordered locus">Atu0560</name>
    <name type="ORF">AGR_C_985</name>
</gene>
<sequence>MNIVIGLIITFGCIIGGYMAMGGHLNVLVQPFELMIIGGAGLGGFIMANPMKVVKDSGKALGEAFKHSVPKERNYLDVLGVLYSLMRDLRTKSRNEIEAHIDNPEESSIFQSAPSVLKNKELTSFICDYVRLIIIGNARSHEIEALMDEEIETILHDKLKPYHAITTMGDSFPAIGIVAAVLGVIKAMGKINESPEVLGGLIGAALVGTMLGIILSYSICNPLASQVKIVRTKQHRLYIIVKQTLIAYMNGSVPQVALEYGRKTISNYERPSIDAVEQEMMNPGGENKAA</sequence>
<name>MOTA_AGRFC</name>
<proteinExistence type="inferred from homology"/>
<accession>Q44456</accession>
<dbReference type="EMBL" id="U63290">
    <property type="protein sequence ID" value="AAC45321.1"/>
    <property type="molecule type" value="Genomic_DNA"/>
</dbReference>
<dbReference type="EMBL" id="U95165">
    <property type="protein sequence ID" value="AAB71782.1"/>
    <property type="molecule type" value="Genomic_DNA"/>
</dbReference>
<dbReference type="EMBL" id="AE007869">
    <property type="protein sequence ID" value="AAK86372.1"/>
    <property type="molecule type" value="Genomic_DNA"/>
</dbReference>
<dbReference type="PIR" id="AC2645">
    <property type="entry name" value="AC2645"/>
</dbReference>
<dbReference type="PIR" id="C97427">
    <property type="entry name" value="C97427"/>
</dbReference>
<dbReference type="RefSeq" id="NP_353587.1">
    <property type="nucleotide sequence ID" value="NC_003062.2"/>
</dbReference>
<dbReference type="RefSeq" id="WP_006313025.1">
    <property type="nucleotide sequence ID" value="NC_003062.2"/>
</dbReference>
<dbReference type="SMR" id="Q44456"/>
<dbReference type="STRING" id="176299.Atu0560"/>
<dbReference type="EnsemblBacteria" id="AAK86372">
    <property type="protein sequence ID" value="AAK86372"/>
    <property type="gene ID" value="Atu0560"/>
</dbReference>
<dbReference type="GeneID" id="1132598"/>
<dbReference type="KEGG" id="atu:Atu0560"/>
<dbReference type="PATRIC" id="fig|176299.10.peg.556"/>
<dbReference type="eggNOG" id="COG1291">
    <property type="taxonomic scope" value="Bacteria"/>
</dbReference>
<dbReference type="HOGENOM" id="CLU_068213_0_0_5"/>
<dbReference type="OrthoDB" id="9782603at2"/>
<dbReference type="PhylomeDB" id="Q44456"/>
<dbReference type="BioCyc" id="AGRO:ATU0560-MONOMER"/>
<dbReference type="Proteomes" id="UP000000813">
    <property type="component" value="Chromosome circular"/>
</dbReference>
<dbReference type="GO" id="GO:0005886">
    <property type="term" value="C:plasma membrane"/>
    <property type="evidence" value="ECO:0007669"/>
    <property type="project" value="UniProtKB-SubCell"/>
</dbReference>
<dbReference type="GO" id="GO:0071978">
    <property type="term" value="P:bacterial-type flagellum-dependent swarming motility"/>
    <property type="evidence" value="ECO:0007669"/>
    <property type="project" value="InterPro"/>
</dbReference>
<dbReference type="GO" id="GO:0006935">
    <property type="term" value="P:chemotaxis"/>
    <property type="evidence" value="ECO:0000315"/>
    <property type="project" value="GO_Central"/>
</dbReference>
<dbReference type="GO" id="GO:1902600">
    <property type="term" value="P:proton transmembrane transport"/>
    <property type="evidence" value="ECO:0007669"/>
    <property type="project" value="UniProtKB-KW"/>
</dbReference>
<dbReference type="InterPro" id="IPR000540">
    <property type="entry name" value="Flag_MotA_CS"/>
</dbReference>
<dbReference type="InterPro" id="IPR022522">
    <property type="entry name" value="Flagellar_motor_stator_MotA"/>
</dbReference>
<dbReference type="InterPro" id="IPR047055">
    <property type="entry name" value="MotA-like"/>
</dbReference>
<dbReference type="InterPro" id="IPR002898">
    <property type="entry name" value="MotA_ExbB_proton_chnl"/>
</dbReference>
<dbReference type="InterPro" id="IPR046786">
    <property type="entry name" value="MotA_N"/>
</dbReference>
<dbReference type="NCBIfam" id="TIGR03818">
    <property type="entry name" value="MotA1"/>
    <property type="match status" value="1"/>
</dbReference>
<dbReference type="PANTHER" id="PTHR30433">
    <property type="entry name" value="CHEMOTAXIS PROTEIN MOTA"/>
    <property type="match status" value="1"/>
</dbReference>
<dbReference type="PANTHER" id="PTHR30433:SF4">
    <property type="entry name" value="MOTILITY PROTEIN A"/>
    <property type="match status" value="1"/>
</dbReference>
<dbReference type="Pfam" id="PF01618">
    <property type="entry name" value="MotA_ExbB"/>
    <property type="match status" value="1"/>
</dbReference>
<dbReference type="Pfam" id="PF20560">
    <property type="entry name" value="MotA_N"/>
    <property type="match status" value="1"/>
</dbReference>
<dbReference type="PROSITE" id="PS01307">
    <property type="entry name" value="MOTA"/>
    <property type="match status" value="1"/>
</dbReference>
<comment type="function">
    <text evidence="1">MotA and MotB comprise the stator element of the flagellar motor complex. Required for rotation of the flagellar motor. Probable transmembrane proton channel (By similarity).</text>
</comment>
<comment type="subunit">
    <text evidence="1">Each stator complex is composed of 4 MotA and 2 MotB subunits. 2 A subunits and 1 B subunit are thought to form a single ion channel, so that each stator complex contains two channels (By similarity).</text>
</comment>
<comment type="subcellular location">
    <subcellularLocation>
        <location evidence="1">Cell inner membrane</location>
        <topology evidence="3">Multi-pass membrane protein</topology>
    </subcellularLocation>
</comment>
<comment type="similarity">
    <text evidence="3">Belongs to the MotA family.</text>
</comment>
<evidence type="ECO:0000250" key="1"/>
<evidence type="ECO:0000255" key="2"/>
<evidence type="ECO:0000305" key="3"/>
<protein>
    <recommendedName>
        <fullName>Motility protein A</fullName>
    </recommendedName>
    <alternativeName>
        <fullName>Chemotaxis protein MotA</fullName>
    </alternativeName>
</protein>
<reference key="1">
    <citation type="journal article" date="1997" name="Gene">
        <title>The Agrobacterium tumefaciens motor gene, motA, is in a linked cluster with the flagellar switch protein genes, fliG, fliM and fliN.</title>
        <authorList>
            <person name="Deakin W.J."/>
            <person name="Parker V.E."/>
            <person name="Loake G.J."/>
            <person name="Shaw C.H."/>
        </authorList>
    </citation>
    <scope>NUCLEOTIDE SEQUENCE [GENOMIC DNA]</scope>
</reference>
<reference key="2">
    <citation type="journal article" date="2001" name="Science">
        <title>The genome of the natural genetic engineer Agrobacterium tumefaciens C58.</title>
        <authorList>
            <person name="Wood D.W."/>
            <person name="Setubal J.C."/>
            <person name="Kaul R."/>
            <person name="Monks D.E."/>
            <person name="Kitajima J.P."/>
            <person name="Okura V.K."/>
            <person name="Zhou Y."/>
            <person name="Chen L."/>
            <person name="Wood G.E."/>
            <person name="Almeida N.F. Jr."/>
            <person name="Woo L."/>
            <person name="Chen Y."/>
            <person name="Paulsen I.T."/>
            <person name="Eisen J.A."/>
            <person name="Karp P.D."/>
            <person name="Bovee D. Sr."/>
            <person name="Chapman P."/>
            <person name="Clendenning J."/>
            <person name="Deatherage G."/>
            <person name="Gillet W."/>
            <person name="Grant C."/>
            <person name="Kutyavin T."/>
            <person name="Levy R."/>
            <person name="Li M.-J."/>
            <person name="McClelland E."/>
            <person name="Palmieri A."/>
            <person name="Raymond C."/>
            <person name="Rouse G."/>
            <person name="Saenphimmachak C."/>
            <person name="Wu Z."/>
            <person name="Romero P."/>
            <person name="Gordon D."/>
            <person name="Zhang S."/>
            <person name="Yoo H."/>
            <person name="Tao Y."/>
            <person name="Biddle P."/>
            <person name="Jung M."/>
            <person name="Krespan W."/>
            <person name="Perry M."/>
            <person name="Gordon-Kamm B."/>
            <person name="Liao L."/>
            <person name="Kim S."/>
            <person name="Hendrick C."/>
            <person name="Zhao Z.-Y."/>
            <person name="Dolan M."/>
            <person name="Chumley F."/>
            <person name="Tingey S.V."/>
            <person name="Tomb J.-F."/>
            <person name="Gordon M.P."/>
            <person name="Olson M.V."/>
            <person name="Nester E.W."/>
        </authorList>
    </citation>
    <scope>NUCLEOTIDE SEQUENCE [LARGE SCALE GENOMIC DNA]</scope>
    <source>
        <strain>C58 / ATCC 33970</strain>
    </source>
</reference>
<reference key="3">
    <citation type="journal article" date="2001" name="Science">
        <title>Genome sequence of the plant pathogen and biotechnology agent Agrobacterium tumefaciens C58.</title>
        <authorList>
            <person name="Goodner B."/>
            <person name="Hinkle G."/>
            <person name="Gattung S."/>
            <person name="Miller N."/>
            <person name="Blanchard M."/>
            <person name="Qurollo B."/>
            <person name="Goldman B.S."/>
            <person name="Cao Y."/>
            <person name="Askenazi M."/>
            <person name="Halling C."/>
            <person name="Mullin L."/>
            <person name="Houmiel K."/>
            <person name="Gordon J."/>
            <person name="Vaudin M."/>
            <person name="Iartchouk O."/>
            <person name="Epp A."/>
            <person name="Liu F."/>
            <person name="Wollam C."/>
            <person name="Allinger M."/>
            <person name="Doughty D."/>
            <person name="Scott C."/>
            <person name="Lappas C."/>
            <person name="Markelz B."/>
            <person name="Flanagan C."/>
            <person name="Crowell C."/>
            <person name="Gurson J."/>
            <person name="Lomo C."/>
            <person name="Sear C."/>
            <person name="Strub G."/>
            <person name="Cielo C."/>
            <person name="Slater S."/>
        </authorList>
    </citation>
    <scope>NUCLEOTIDE SEQUENCE [LARGE SCALE GENOMIC DNA]</scope>
    <source>
        <strain>C58 / ATCC 33970</strain>
    </source>
</reference>
<feature type="chain" id="PRO_0000189568" description="Motility protein A">
    <location>
        <begin position="1"/>
        <end position="290"/>
    </location>
</feature>
<feature type="transmembrane region" description="Helical" evidence="2">
    <location>
        <begin position="3"/>
        <end position="23"/>
    </location>
</feature>
<feature type="transmembrane region" description="Helical" evidence="2">
    <location>
        <begin position="27"/>
        <end position="47"/>
    </location>
</feature>
<feature type="transmembrane region" description="Helical" evidence="2">
    <location>
        <begin position="165"/>
        <end position="185"/>
    </location>
</feature>
<feature type="transmembrane region" description="Helical" evidence="2">
    <location>
        <begin position="197"/>
        <end position="217"/>
    </location>
</feature>
<keyword id="KW-0997">Cell inner membrane</keyword>
<keyword id="KW-1003">Cell membrane</keyword>
<keyword id="KW-0145">Chemotaxis</keyword>
<keyword id="KW-0283">Flagellar rotation</keyword>
<keyword id="KW-0375">Hydrogen ion transport</keyword>
<keyword id="KW-0406">Ion transport</keyword>
<keyword id="KW-0472">Membrane</keyword>
<keyword id="KW-1185">Reference proteome</keyword>
<keyword id="KW-0812">Transmembrane</keyword>
<keyword id="KW-1133">Transmembrane helix</keyword>
<keyword id="KW-0813">Transport</keyword>
<organism>
    <name type="scientific">Agrobacterium fabrum (strain C58 / ATCC 33970)</name>
    <name type="common">Agrobacterium tumefaciens (strain C58)</name>
    <dbReference type="NCBI Taxonomy" id="176299"/>
    <lineage>
        <taxon>Bacteria</taxon>
        <taxon>Pseudomonadati</taxon>
        <taxon>Pseudomonadota</taxon>
        <taxon>Alphaproteobacteria</taxon>
        <taxon>Hyphomicrobiales</taxon>
        <taxon>Rhizobiaceae</taxon>
        <taxon>Rhizobium/Agrobacterium group</taxon>
        <taxon>Agrobacterium</taxon>
        <taxon>Agrobacterium tumefaciens complex</taxon>
    </lineage>
</organism>